<organism>
    <name type="scientific">Escherichia coli O6:H1 (strain CFT073 / ATCC 700928 / UPEC)</name>
    <dbReference type="NCBI Taxonomy" id="199310"/>
    <lineage>
        <taxon>Bacteria</taxon>
        <taxon>Pseudomonadati</taxon>
        <taxon>Pseudomonadota</taxon>
        <taxon>Gammaproteobacteria</taxon>
        <taxon>Enterobacterales</taxon>
        <taxon>Enterobacteriaceae</taxon>
        <taxon>Escherichia</taxon>
    </lineage>
</organism>
<keyword id="KW-0028">Amino-acid biosynthesis</keyword>
<keyword id="KW-0057">Aromatic amino acid biosynthesis</keyword>
<keyword id="KW-0963">Cytoplasm</keyword>
<keyword id="KW-1185">Reference proteome</keyword>
<keyword id="KW-0808">Transferase</keyword>
<comment type="function">
    <text evidence="1">Catalyzes the transfer of the enolpyruvyl moiety of phosphoenolpyruvate (PEP) to the 5-hydroxyl of shikimate-3-phosphate (S3P) to produce enolpyruvyl shikimate-3-phosphate and inorganic phosphate.</text>
</comment>
<comment type="catalytic activity">
    <reaction evidence="1">
        <text>3-phosphoshikimate + phosphoenolpyruvate = 5-O-(1-carboxyvinyl)-3-phosphoshikimate + phosphate</text>
        <dbReference type="Rhea" id="RHEA:21256"/>
        <dbReference type="ChEBI" id="CHEBI:43474"/>
        <dbReference type="ChEBI" id="CHEBI:57701"/>
        <dbReference type="ChEBI" id="CHEBI:58702"/>
        <dbReference type="ChEBI" id="CHEBI:145989"/>
        <dbReference type="EC" id="2.5.1.19"/>
    </reaction>
    <physiologicalReaction direction="left-to-right" evidence="1">
        <dbReference type="Rhea" id="RHEA:21257"/>
    </physiologicalReaction>
</comment>
<comment type="pathway">
    <text evidence="1">Metabolic intermediate biosynthesis; chorismate biosynthesis; chorismate from D-erythrose 4-phosphate and phosphoenolpyruvate: step 6/7.</text>
</comment>
<comment type="subunit">
    <text evidence="1">Monomer.</text>
</comment>
<comment type="subcellular location">
    <subcellularLocation>
        <location evidence="1">Cytoplasm</location>
    </subcellularLocation>
</comment>
<comment type="similarity">
    <text evidence="1">Belongs to the EPSP synthase family.</text>
</comment>
<sequence length="427" mass="46208">MESLTLQPIARVDGTINLPGSKSVSNRALLLAALAHGKTVLTNLLDSDDVRHMLNALTALGVSYTLSADRTRCEIIGNGGPLHAESARELFLGNAGTAMRPLAAALCLGSNDIVLTGEPRMKERPIGHLVDALRQGGAKITYLEQENYPPLRLQGGFTGGNVDVDGSVSSQFLTALLMTAPLAPEDTVIRIKGDLVSKPYIDITLNLMKTFGVEIENQHYQQFVVKGGQSYQSPGTYLVEGDASSASYFLAAAAIRGGTVKVTGIGRNSMQGDIRFADVLEKMGATICWGDDYISCTRGELNAIDMDMNHIPDAAMTIATAALFAKGTTTLRNIYNWRVKESDRLFAMATELRKVGAEVEEGHDFIRITPPEKLKFAEIATYNDHRMAMCFSLVALSDTPVTILDPKCTAKTFPDYFEQLARISQPG</sequence>
<evidence type="ECO:0000255" key="1">
    <source>
        <dbReference type="HAMAP-Rule" id="MF_00210"/>
    </source>
</evidence>
<name>AROA_ECOL6</name>
<gene>
    <name evidence="1" type="primary">aroA</name>
    <name type="ordered locus">c1046</name>
</gene>
<dbReference type="EC" id="2.5.1.19" evidence="1"/>
<dbReference type="EMBL" id="AE014075">
    <property type="protein sequence ID" value="AAN79516.1"/>
    <property type="molecule type" value="Genomic_DNA"/>
</dbReference>
<dbReference type="RefSeq" id="WP_000445243.1">
    <property type="nucleotide sequence ID" value="NZ_CP051263.1"/>
</dbReference>
<dbReference type="SMR" id="Q8FJB6"/>
<dbReference type="STRING" id="199310.c1046"/>
<dbReference type="KEGG" id="ecc:c1046"/>
<dbReference type="eggNOG" id="COG0128">
    <property type="taxonomic scope" value="Bacteria"/>
</dbReference>
<dbReference type="HOGENOM" id="CLU_024321_0_0_6"/>
<dbReference type="BioCyc" id="ECOL199310:C1046-MONOMER"/>
<dbReference type="UniPathway" id="UPA00053">
    <property type="reaction ID" value="UER00089"/>
</dbReference>
<dbReference type="Proteomes" id="UP000001410">
    <property type="component" value="Chromosome"/>
</dbReference>
<dbReference type="GO" id="GO:0005737">
    <property type="term" value="C:cytoplasm"/>
    <property type="evidence" value="ECO:0007669"/>
    <property type="project" value="UniProtKB-SubCell"/>
</dbReference>
<dbReference type="GO" id="GO:0003866">
    <property type="term" value="F:3-phosphoshikimate 1-carboxyvinyltransferase activity"/>
    <property type="evidence" value="ECO:0007669"/>
    <property type="project" value="UniProtKB-UniRule"/>
</dbReference>
<dbReference type="GO" id="GO:0008652">
    <property type="term" value="P:amino acid biosynthetic process"/>
    <property type="evidence" value="ECO:0007669"/>
    <property type="project" value="UniProtKB-KW"/>
</dbReference>
<dbReference type="GO" id="GO:0009073">
    <property type="term" value="P:aromatic amino acid family biosynthetic process"/>
    <property type="evidence" value="ECO:0007669"/>
    <property type="project" value="UniProtKB-KW"/>
</dbReference>
<dbReference type="GO" id="GO:0009423">
    <property type="term" value="P:chorismate biosynthetic process"/>
    <property type="evidence" value="ECO:0007669"/>
    <property type="project" value="UniProtKB-UniRule"/>
</dbReference>
<dbReference type="CDD" id="cd01554">
    <property type="entry name" value="EPT-like"/>
    <property type="match status" value="1"/>
</dbReference>
<dbReference type="FunFam" id="3.65.10.10:FF:000003">
    <property type="entry name" value="3-phosphoshikimate 1-carboxyvinyltransferase"/>
    <property type="match status" value="1"/>
</dbReference>
<dbReference type="FunFam" id="3.65.10.10:FF:000004">
    <property type="entry name" value="3-phosphoshikimate 1-carboxyvinyltransferase"/>
    <property type="match status" value="1"/>
</dbReference>
<dbReference type="Gene3D" id="3.65.10.10">
    <property type="entry name" value="Enolpyruvate transferase domain"/>
    <property type="match status" value="2"/>
</dbReference>
<dbReference type="HAMAP" id="MF_00210">
    <property type="entry name" value="EPSP_synth"/>
    <property type="match status" value="1"/>
</dbReference>
<dbReference type="InterPro" id="IPR001986">
    <property type="entry name" value="Enolpyruvate_Tfrase_dom"/>
</dbReference>
<dbReference type="InterPro" id="IPR036968">
    <property type="entry name" value="Enolpyruvate_Tfrase_sf"/>
</dbReference>
<dbReference type="InterPro" id="IPR006264">
    <property type="entry name" value="EPSP_synthase"/>
</dbReference>
<dbReference type="InterPro" id="IPR023193">
    <property type="entry name" value="EPSP_synthase_CS"/>
</dbReference>
<dbReference type="InterPro" id="IPR013792">
    <property type="entry name" value="RNA3'P_cycl/enolpyr_Trfase_a/b"/>
</dbReference>
<dbReference type="NCBIfam" id="TIGR01356">
    <property type="entry name" value="aroA"/>
    <property type="match status" value="1"/>
</dbReference>
<dbReference type="PANTHER" id="PTHR21090">
    <property type="entry name" value="AROM/DEHYDROQUINATE SYNTHASE"/>
    <property type="match status" value="1"/>
</dbReference>
<dbReference type="PANTHER" id="PTHR21090:SF5">
    <property type="entry name" value="PENTAFUNCTIONAL AROM POLYPEPTIDE"/>
    <property type="match status" value="1"/>
</dbReference>
<dbReference type="Pfam" id="PF00275">
    <property type="entry name" value="EPSP_synthase"/>
    <property type="match status" value="1"/>
</dbReference>
<dbReference type="PIRSF" id="PIRSF000505">
    <property type="entry name" value="EPSPS"/>
    <property type="match status" value="1"/>
</dbReference>
<dbReference type="SUPFAM" id="SSF55205">
    <property type="entry name" value="EPT/RTPC-like"/>
    <property type="match status" value="1"/>
</dbReference>
<dbReference type="PROSITE" id="PS00104">
    <property type="entry name" value="EPSP_SYNTHASE_1"/>
    <property type="match status" value="1"/>
</dbReference>
<dbReference type="PROSITE" id="PS00885">
    <property type="entry name" value="EPSP_SYNTHASE_2"/>
    <property type="match status" value="1"/>
</dbReference>
<protein>
    <recommendedName>
        <fullName evidence="1">3-phosphoshikimate 1-carboxyvinyltransferase</fullName>
        <ecNumber evidence="1">2.5.1.19</ecNumber>
    </recommendedName>
    <alternativeName>
        <fullName evidence="1">5-enolpyruvylshikimate-3-phosphate synthase</fullName>
        <shortName evidence="1">EPSP synthase</shortName>
        <shortName evidence="1">EPSPS</shortName>
    </alternativeName>
</protein>
<feature type="chain" id="PRO_0000088255" description="3-phosphoshikimate 1-carboxyvinyltransferase">
    <location>
        <begin position="1"/>
        <end position="427"/>
    </location>
</feature>
<feature type="active site" description="Proton acceptor" evidence="1">
    <location>
        <position position="313"/>
    </location>
</feature>
<feature type="binding site" evidence="1">
    <location>
        <position position="22"/>
    </location>
    <ligand>
        <name>3-phosphoshikimate</name>
        <dbReference type="ChEBI" id="CHEBI:145989"/>
    </ligand>
</feature>
<feature type="binding site" evidence="1">
    <location>
        <position position="22"/>
    </location>
    <ligand>
        <name>phosphoenolpyruvate</name>
        <dbReference type="ChEBI" id="CHEBI:58702"/>
    </ligand>
</feature>
<feature type="binding site" evidence="1">
    <location>
        <position position="23"/>
    </location>
    <ligand>
        <name>3-phosphoshikimate</name>
        <dbReference type="ChEBI" id="CHEBI:145989"/>
    </ligand>
</feature>
<feature type="binding site" evidence="1">
    <location>
        <position position="27"/>
    </location>
    <ligand>
        <name>3-phosphoshikimate</name>
        <dbReference type="ChEBI" id="CHEBI:145989"/>
    </ligand>
</feature>
<feature type="binding site" evidence="1">
    <location>
        <position position="96"/>
    </location>
    <ligand>
        <name>phosphoenolpyruvate</name>
        <dbReference type="ChEBI" id="CHEBI:58702"/>
    </ligand>
</feature>
<feature type="binding site" evidence="1">
    <location>
        <position position="124"/>
    </location>
    <ligand>
        <name>phosphoenolpyruvate</name>
        <dbReference type="ChEBI" id="CHEBI:58702"/>
    </ligand>
</feature>
<feature type="binding site" evidence="1">
    <location>
        <position position="169"/>
    </location>
    <ligand>
        <name>3-phosphoshikimate</name>
        <dbReference type="ChEBI" id="CHEBI:145989"/>
    </ligand>
</feature>
<feature type="binding site" evidence="1">
    <location>
        <position position="170"/>
    </location>
    <ligand>
        <name>3-phosphoshikimate</name>
        <dbReference type="ChEBI" id="CHEBI:145989"/>
    </ligand>
</feature>
<feature type="binding site" evidence="1">
    <location>
        <position position="171"/>
    </location>
    <ligand>
        <name>3-phosphoshikimate</name>
        <dbReference type="ChEBI" id="CHEBI:145989"/>
    </ligand>
</feature>
<feature type="binding site" evidence="1">
    <location>
        <position position="171"/>
    </location>
    <ligand>
        <name>phosphoenolpyruvate</name>
        <dbReference type="ChEBI" id="CHEBI:58702"/>
    </ligand>
</feature>
<feature type="binding site" evidence="1">
    <location>
        <position position="197"/>
    </location>
    <ligand>
        <name>3-phosphoshikimate</name>
        <dbReference type="ChEBI" id="CHEBI:145989"/>
    </ligand>
</feature>
<feature type="binding site" evidence="1">
    <location>
        <position position="313"/>
    </location>
    <ligand>
        <name>3-phosphoshikimate</name>
        <dbReference type="ChEBI" id="CHEBI:145989"/>
    </ligand>
</feature>
<feature type="binding site" evidence="1">
    <location>
        <position position="336"/>
    </location>
    <ligand>
        <name>3-phosphoshikimate</name>
        <dbReference type="ChEBI" id="CHEBI:145989"/>
    </ligand>
</feature>
<feature type="binding site" evidence="1">
    <location>
        <position position="340"/>
    </location>
    <ligand>
        <name>3-phosphoshikimate</name>
        <dbReference type="ChEBI" id="CHEBI:145989"/>
    </ligand>
</feature>
<feature type="binding site" evidence="1">
    <location>
        <position position="344"/>
    </location>
    <ligand>
        <name>phosphoenolpyruvate</name>
        <dbReference type="ChEBI" id="CHEBI:58702"/>
    </ligand>
</feature>
<feature type="binding site" evidence="1">
    <location>
        <position position="386"/>
    </location>
    <ligand>
        <name>phosphoenolpyruvate</name>
        <dbReference type="ChEBI" id="CHEBI:58702"/>
    </ligand>
</feature>
<feature type="binding site" evidence="1">
    <location>
        <position position="411"/>
    </location>
    <ligand>
        <name>phosphoenolpyruvate</name>
        <dbReference type="ChEBI" id="CHEBI:58702"/>
    </ligand>
</feature>
<accession>Q8FJB6</accession>
<proteinExistence type="inferred from homology"/>
<reference key="1">
    <citation type="journal article" date="2002" name="Proc. Natl. Acad. Sci. U.S.A.">
        <title>Extensive mosaic structure revealed by the complete genome sequence of uropathogenic Escherichia coli.</title>
        <authorList>
            <person name="Welch R.A."/>
            <person name="Burland V."/>
            <person name="Plunkett G. III"/>
            <person name="Redford P."/>
            <person name="Roesch P."/>
            <person name="Rasko D."/>
            <person name="Buckles E.L."/>
            <person name="Liou S.-R."/>
            <person name="Boutin A."/>
            <person name="Hackett J."/>
            <person name="Stroud D."/>
            <person name="Mayhew G.F."/>
            <person name="Rose D.J."/>
            <person name="Zhou S."/>
            <person name="Schwartz D.C."/>
            <person name="Perna N.T."/>
            <person name="Mobley H.L.T."/>
            <person name="Donnenberg M.S."/>
            <person name="Blattner F.R."/>
        </authorList>
    </citation>
    <scope>NUCLEOTIDE SEQUENCE [LARGE SCALE GENOMIC DNA]</scope>
    <source>
        <strain>CFT073 / ATCC 700928 / UPEC</strain>
    </source>
</reference>